<accession>P0CD38</accession>
<accession>A1XGT1</accession>
<sequence length="510" mass="56675">MIWHVQNENFILDSTRIFMKAFHLLLFHGSFIFPECILIFGLILLLMIDLTSDQKDIPWLYFISSTSLVMSIAALLFRWREEPMISFSGNFQTNNFNEIFQFLILLCSTLCIPLSVEYIECTEMAITEFLLFVLTATLGGMFLCGANDLITIFVAPECFSLCSYLLSGYTKRDVRSNEATMKYLLMGGASSSILVHGFSWLYGSSGGEIELQEIANGLINTQMYNSPGISIALIFITVGIGFKLSLAPSHQWTPDVYEGSPTPVVAFLSVTSKVAASALATRIFDIPFYFSSNEWHLLLEILAILSMILGNLIAITQTSMKRMLAYSSIGQIGYVIIGIIVGDSNDGYASMITYMLFYISMNLGTFACIVSFGLRTGTDNIRDYAGLYTKDPFLALSLALCLLSLGGLPPLAGFFGKLHLFWCGWQAGLYFLVSIGLLTSVVSIYYYLKIIKLLMTGRNQEITPHVRNYRRSPLRSNNSIELSMIVCVIASTIPGISMNPIIAIAQDTLF</sequence>
<name>NU2C1_RANMC</name>
<evidence type="ECO:0000255" key="1">
    <source>
        <dbReference type="HAMAP-Rule" id="MF_00445"/>
    </source>
</evidence>
<comment type="function">
    <text evidence="1">NDH shuttles electrons from NAD(P)H:plastoquinone, via FMN and iron-sulfur (Fe-S) centers, to quinones in the photosynthetic chain and possibly in a chloroplast respiratory chain. The immediate electron acceptor for the enzyme in this species is believed to be plastoquinone. Couples the redox reaction to proton translocation, and thus conserves the redox energy in a proton gradient.</text>
</comment>
<comment type="catalytic activity">
    <reaction evidence="1">
        <text>a plastoquinone + NADH + (n+1) H(+)(in) = a plastoquinol + NAD(+) + n H(+)(out)</text>
        <dbReference type="Rhea" id="RHEA:42608"/>
        <dbReference type="Rhea" id="RHEA-COMP:9561"/>
        <dbReference type="Rhea" id="RHEA-COMP:9562"/>
        <dbReference type="ChEBI" id="CHEBI:15378"/>
        <dbReference type="ChEBI" id="CHEBI:17757"/>
        <dbReference type="ChEBI" id="CHEBI:57540"/>
        <dbReference type="ChEBI" id="CHEBI:57945"/>
        <dbReference type="ChEBI" id="CHEBI:62192"/>
    </reaction>
</comment>
<comment type="catalytic activity">
    <reaction evidence="1">
        <text>a plastoquinone + NADPH + (n+1) H(+)(in) = a plastoquinol + NADP(+) + n H(+)(out)</text>
        <dbReference type="Rhea" id="RHEA:42612"/>
        <dbReference type="Rhea" id="RHEA-COMP:9561"/>
        <dbReference type="Rhea" id="RHEA-COMP:9562"/>
        <dbReference type="ChEBI" id="CHEBI:15378"/>
        <dbReference type="ChEBI" id="CHEBI:17757"/>
        <dbReference type="ChEBI" id="CHEBI:57783"/>
        <dbReference type="ChEBI" id="CHEBI:58349"/>
        <dbReference type="ChEBI" id="CHEBI:62192"/>
    </reaction>
</comment>
<comment type="subunit">
    <text evidence="1">NDH is composed of at least 16 different subunits, 5 of which are encoded in the nucleus.</text>
</comment>
<comment type="subcellular location">
    <subcellularLocation>
        <location evidence="1">Plastid</location>
        <location evidence="1">Chloroplast thylakoid membrane</location>
        <topology evidence="1">Multi-pass membrane protein</topology>
    </subcellularLocation>
</comment>
<comment type="similarity">
    <text evidence="1">Belongs to the complex I subunit 2 family.</text>
</comment>
<geneLocation type="chloroplast"/>
<gene>
    <name evidence="1" type="primary">ndhB1</name>
</gene>
<reference key="1">
    <citation type="journal article" date="2007" name="BMC Genomics">
        <title>Comparative chloroplast genomics: analyses including new sequences from the angiosperms Nuphar advena and Ranunculus macranthus.</title>
        <authorList>
            <person name="Raubeson L.A."/>
            <person name="Peery R."/>
            <person name="Chumley T.W."/>
            <person name="Dziubek C."/>
            <person name="Fourcade H.M."/>
            <person name="Boore J.L."/>
            <person name="Jansen R.K."/>
        </authorList>
    </citation>
    <scope>NUCLEOTIDE SEQUENCE [LARGE SCALE GENOMIC DNA]</scope>
</reference>
<protein>
    <recommendedName>
        <fullName evidence="1">NAD(P)H-quinone oxidoreductase subunit 2 A, chloroplastic</fullName>
        <ecNumber evidence="1">7.1.1.-</ecNumber>
    </recommendedName>
    <alternativeName>
        <fullName evidence="1">NAD(P)H dehydrogenase, subunit 2 A</fullName>
    </alternativeName>
    <alternativeName>
        <fullName evidence="1">NADH-plastoquinone oxidoreductase subunit 2 A</fullName>
    </alternativeName>
</protein>
<feature type="chain" id="PRO_0000344282" description="NAD(P)H-quinone oxidoreductase subunit 2 A, chloroplastic">
    <location>
        <begin position="1"/>
        <end position="510"/>
    </location>
</feature>
<feature type="transmembrane region" description="Helical" evidence="1">
    <location>
        <begin position="24"/>
        <end position="44"/>
    </location>
</feature>
<feature type="transmembrane region" description="Helical" evidence="1">
    <location>
        <begin position="57"/>
        <end position="77"/>
    </location>
</feature>
<feature type="transmembrane region" description="Helical" evidence="1">
    <location>
        <begin position="99"/>
        <end position="119"/>
    </location>
</feature>
<feature type="transmembrane region" description="Helical" evidence="1">
    <location>
        <begin position="124"/>
        <end position="144"/>
    </location>
</feature>
<feature type="transmembrane region" description="Helical" evidence="1">
    <location>
        <begin position="149"/>
        <end position="169"/>
    </location>
</feature>
<feature type="transmembrane region" description="Helical" evidence="1">
    <location>
        <begin position="183"/>
        <end position="203"/>
    </location>
</feature>
<feature type="transmembrane region" description="Helical" evidence="1">
    <location>
        <begin position="227"/>
        <end position="247"/>
    </location>
</feature>
<feature type="transmembrane region" description="Helical" evidence="1">
    <location>
        <begin position="295"/>
        <end position="315"/>
    </location>
</feature>
<feature type="transmembrane region" description="Helical" evidence="1">
    <location>
        <begin position="323"/>
        <end position="343"/>
    </location>
</feature>
<feature type="transmembrane region" description="Helical" evidence="1">
    <location>
        <begin position="354"/>
        <end position="374"/>
    </location>
</feature>
<feature type="transmembrane region" description="Helical" evidence="1">
    <location>
        <begin position="395"/>
        <end position="415"/>
    </location>
</feature>
<feature type="transmembrane region" description="Helical" evidence="1">
    <location>
        <begin position="418"/>
        <end position="438"/>
    </location>
</feature>
<feature type="transmembrane region" description="Helical" evidence="1">
    <location>
        <begin position="484"/>
        <end position="504"/>
    </location>
</feature>
<organism>
    <name type="scientific">Ranunculus macranthus</name>
    <name type="common">Large buttercup</name>
    <dbReference type="NCBI Taxonomy" id="334596"/>
    <lineage>
        <taxon>Eukaryota</taxon>
        <taxon>Viridiplantae</taxon>
        <taxon>Streptophyta</taxon>
        <taxon>Embryophyta</taxon>
        <taxon>Tracheophyta</taxon>
        <taxon>Spermatophyta</taxon>
        <taxon>Magnoliopsida</taxon>
        <taxon>Ranunculales</taxon>
        <taxon>Ranunculaceae</taxon>
        <taxon>Ranunculoideae</taxon>
        <taxon>Ranunculeae</taxon>
        <taxon>Ranunculus</taxon>
    </lineage>
</organism>
<keyword id="KW-0150">Chloroplast</keyword>
<keyword id="KW-0472">Membrane</keyword>
<keyword id="KW-0520">NAD</keyword>
<keyword id="KW-0521">NADP</keyword>
<keyword id="KW-0934">Plastid</keyword>
<keyword id="KW-0618">Plastoquinone</keyword>
<keyword id="KW-0874">Quinone</keyword>
<keyword id="KW-0793">Thylakoid</keyword>
<keyword id="KW-1278">Translocase</keyword>
<keyword id="KW-0812">Transmembrane</keyword>
<keyword id="KW-1133">Transmembrane helix</keyword>
<keyword id="KW-0813">Transport</keyword>
<proteinExistence type="inferred from homology"/>
<dbReference type="EC" id="7.1.1.-" evidence="1"/>
<dbReference type="EMBL" id="DQ359689">
    <property type="protein sequence ID" value="ABC70799.1"/>
    <property type="molecule type" value="Genomic_DNA"/>
</dbReference>
<dbReference type="SMR" id="P0CD38"/>
<dbReference type="GO" id="GO:0009535">
    <property type="term" value="C:chloroplast thylakoid membrane"/>
    <property type="evidence" value="ECO:0007669"/>
    <property type="project" value="UniProtKB-SubCell"/>
</dbReference>
<dbReference type="GO" id="GO:0008137">
    <property type="term" value="F:NADH dehydrogenase (ubiquinone) activity"/>
    <property type="evidence" value="ECO:0007669"/>
    <property type="project" value="InterPro"/>
</dbReference>
<dbReference type="GO" id="GO:0048038">
    <property type="term" value="F:quinone binding"/>
    <property type="evidence" value="ECO:0007669"/>
    <property type="project" value="UniProtKB-KW"/>
</dbReference>
<dbReference type="GO" id="GO:0042773">
    <property type="term" value="P:ATP synthesis coupled electron transport"/>
    <property type="evidence" value="ECO:0007669"/>
    <property type="project" value="InterPro"/>
</dbReference>
<dbReference type="GO" id="GO:0019684">
    <property type="term" value="P:photosynthesis, light reaction"/>
    <property type="evidence" value="ECO:0007669"/>
    <property type="project" value="UniProtKB-UniRule"/>
</dbReference>
<dbReference type="HAMAP" id="MF_00445">
    <property type="entry name" value="NDH1_NuoN_1"/>
    <property type="match status" value="1"/>
</dbReference>
<dbReference type="InterPro" id="IPR010096">
    <property type="entry name" value="NADH-Q_OxRdtase_suN/2"/>
</dbReference>
<dbReference type="InterPro" id="IPR001750">
    <property type="entry name" value="ND/Mrp_TM"/>
</dbReference>
<dbReference type="InterPro" id="IPR045693">
    <property type="entry name" value="Ndh2_N"/>
</dbReference>
<dbReference type="NCBIfam" id="TIGR01770">
    <property type="entry name" value="NDH_I_N"/>
    <property type="match status" value="1"/>
</dbReference>
<dbReference type="NCBIfam" id="NF002701">
    <property type="entry name" value="PRK02504.1"/>
    <property type="match status" value="1"/>
</dbReference>
<dbReference type="PANTHER" id="PTHR22773">
    <property type="entry name" value="NADH DEHYDROGENASE"/>
    <property type="match status" value="1"/>
</dbReference>
<dbReference type="Pfam" id="PF19530">
    <property type="entry name" value="Ndh2_N"/>
    <property type="match status" value="1"/>
</dbReference>
<dbReference type="Pfam" id="PF00361">
    <property type="entry name" value="Proton_antipo_M"/>
    <property type="match status" value="1"/>
</dbReference>